<proteinExistence type="inferred from homology"/>
<organism>
    <name type="scientific">Ehrlichia canis (strain Jake)</name>
    <dbReference type="NCBI Taxonomy" id="269484"/>
    <lineage>
        <taxon>Bacteria</taxon>
        <taxon>Pseudomonadati</taxon>
        <taxon>Pseudomonadota</taxon>
        <taxon>Alphaproteobacteria</taxon>
        <taxon>Rickettsiales</taxon>
        <taxon>Anaplasmataceae</taxon>
        <taxon>Ehrlichia</taxon>
    </lineage>
</organism>
<name>MIAA_EHRCJ</name>
<keyword id="KW-0067">ATP-binding</keyword>
<keyword id="KW-0460">Magnesium</keyword>
<keyword id="KW-0547">Nucleotide-binding</keyword>
<keyword id="KW-0808">Transferase</keyword>
<keyword id="KW-0819">tRNA processing</keyword>
<evidence type="ECO:0000255" key="1">
    <source>
        <dbReference type="HAMAP-Rule" id="MF_00185"/>
    </source>
</evidence>
<comment type="function">
    <text evidence="1">Catalyzes the transfer of a dimethylallyl group onto the adenine at position 37 in tRNAs that read codons beginning with uridine, leading to the formation of N6-(dimethylallyl)adenosine (i(6)A).</text>
</comment>
<comment type="catalytic activity">
    <reaction evidence="1">
        <text>adenosine(37) in tRNA + dimethylallyl diphosphate = N(6)-dimethylallyladenosine(37) in tRNA + diphosphate</text>
        <dbReference type="Rhea" id="RHEA:26482"/>
        <dbReference type="Rhea" id="RHEA-COMP:10162"/>
        <dbReference type="Rhea" id="RHEA-COMP:10375"/>
        <dbReference type="ChEBI" id="CHEBI:33019"/>
        <dbReference type="ChEBI" id="CHEBI:57623"/>
        <dbReference type="ChEBI" id="CHEBI:74411"/>
        <dbReference type="ChEBI" id="CHEBI:74415"/>
        <dbReference type="EC" id="2.5.1.75"/>
    </reaction>
</comment>
<comment type="cofactor">
    <cofactor evidence="1">
        <name>Mg(2+)</name>
        <dbReference type="ChEBI" id="CHEBI:18420"/>
    </cofactor>
</comment>
<comment type="subunit">
    <text evidence="1">Monomer.</text>
</comment>
<comment type="similarity">
    <text evidence="1">Belongs to the IPP transferase family.</text>
</comment>
<accession>Q3YS11</accession>
<reference key="1">
    <citation type="journal article" date="2006" name="J. Bacteriol.">
        <title>The genome of the obligately intracellular bacterium Ehrlichia canis reveals themes of complex membrane structure and immune evasion strategies.</title>
        <authorList>
            <person name="Mavromatis K."/>
            <person name="Doyle C.K."/>
            <person name="Lykidis A."/>
            <person name="Ivanova N."/>
            <person name="Francino M.P."/>
            <person name="Chain P."/>
            <person name="Shin M."/>
            <person name="Malfatti S."/>
            <person name="Larimer F."/>
            <person name="Copeland A."/>
            <person name="Detter J.C."/>
            <person name="Land M."/>
            <person name="Richardson P.M."/>
            <person name="Yu X.J."/>
            <person name="Walker D.H."/>
            <person name="McBride J.W."/>
            <person name="Kyrpides N.C."/>
        </authorList>
    </citation>
    <scope>NUCLEOTIDE SEQUENCE [LARGE SCALE GENOMIC DNA]</scope>
    <source>
        <strain>Jake</strain>
    </source>
</reference>
<sequence length="300" mass="34563">MNNVLIITGPTASGKSKISVKIAQDNNGIIVNCDSKQIYKEIPIITDQPKLNDYSVKHRLYGYISVTQQYSVGLWIEDLKKEILSATAEKKLPIITGGSGMYINSIIYGLSQIPKIEDDVRYKTKKLFEDLGNKEFYALLINKDPLAKCLHQNNSHRLLRAYEVIEQTGISIFSWKKNTIRQPILNNFKLCVLLPPRDQVYKTINERFINMINTDVIEEIENLLSLNVPKHFPAMKAHGVPELISYLKNKISIDEAIETAQKNTRHYAKRQYTWFKNQFPNASFYDSKCQLLESIKNYQN</sequence>
<feature type="chain" id="PRO_0000377151" description="tRNA dimethylallyltransferase">
    <location>
        <begin position="1"/>
        <end position="300"/>
    </location>
</feature>
<feature type="region of interest" description="Interaction with substrate tRNA" evidence="1">
    <location>
        <begin position="34"/>
        <end position="37"/>
    </location>
</feature>
<feature type="binding site" evidence="1">
    <location>
        <begin position="9"/>
        <end position="16"/>
    </location>
    <ligand>
        <name>ATP</name>
        <dbReference type="ChEBI" id="CHEBI:30616"/>
    </ligand>
</feature>
<feature type="binding site" evidence="1">
    <location>
        <begin position="11"/>
        <end position="16"/>
    </location>
    <ligand>
        <name>substrate</name>
    </ligand>
</feature>
<feature type="site" description="Interaction with substrate tRNA" evidence="1">
    <location>
        <position position="99"/>
    </location>
</feature>
<feature type="site" description="Interaction with substrate tRNA" evidence="1">
    <location>
        <position position="121"/>
    </location>
</feature>
<dbReference type="EC" id="2.5.1.75" evidence="1"/>
<dbReference type="EMBL" id="CP000107">
    <property type="protein sequence ID" value="AAZ68494.1"/>
    <property type="molecule type" value="Genomic_DNA"/>
</dbReference>
<dbReference type="RefSeq" id="WP_011304572.1">
    <property type="nucleotide sequence ID" value="NC_007354.1"/>
</dbReference>
<dbReference type="SMR" id="Q3YS11"/>
<dbReference type="FunCoup" id="Q3YS11">
    <property type="interactions" value="297"/>
</dbReference>
<dbReference type="STRING" id="269484.Ecaj_0457"/>
<dbReference type="KEGG" id="ecn:Ecaj_0457"/>
<dbReference type="eggNOG" id="COG0324">
    <property type="taxonomic scope" value="Bacteria"/>
</dbReference>
<dbReference type="HOGENOM" id="CLU_032616_0_1_5"/>
<dbReference type="InParanoid" id="Q3YS11"/>
<dbReference type="Proteomes" id="UP000000435">
    <property type="component" value="Chromosome"/>
</dbReference>
<dbReference type="GO" id="GO:0005524">
    <property type="term" value="F:ATP binding"/>
    <property type="evidence" value="ECO:0007669"/>
    <property type="project" value="UniProtKB-UniRule"/>
</dbReference>
<dbReference type="GO" id="GO:0052381">
    <property type="term" value="F:tRNA dimethylallyltransferase activity"/>
    <property type="evidence" value="ECO:0007669"/>
    <property type="project" value="UniProtKB-UniRule"/>
</dbReference>
<dbReference type="GO" id="GO:0006400">
    <property type="term" value="P:tRNA modification"/>
    <property type="evidence" value="ECO:0007669"/>
    <property type="project" value="TreeGrafter"/>
</dbReference>
<dbReference type="Gene3D" id="1.10.20.140">
    <property type="match status" value="1"/>
</dbReference>
<dbReference type="Gene3D" id="3.40.50.300">
    <property type="entry name" value="P-loop containing nucleotide triphosphate hydrolases"/>
    <property type="match status" value="1"/>
</dbReference>
<dbReference type="HAMAP" id="MF_00185">
    <property type="entry name" value="IPP_trans"/>
    <property type="match status" value="1"/>
</dbReference>
<dbReference type="InterPro" id="IPR039657">
    <property type="entry name" value="Dimethylallyltransferase"/>
</dbReference>
<dbReference type="InterPro" id="IPR018022">
    <property type="entry name" value="IPT"/>
</dbReference>
<dbReference type="InterPro" id="IPR027417">
    <property type="entry name" value="P-loop_NTPase"/>
</dbReference>
<dbReference type="NCBIfam" id="TIGR00174">
    <property type="entry name" value="miaA"/>
    <property type="match status" value="1"/>
</dbReference>
<dbReference type="PANTHER" id="PTHR11088">
    <property type="entry name" value="TRNA DIMETHYLALLYLTRANSFERASE"/>
    <property type="match status" value="1"/>
</dbReference>
<dbReference type="PANTHER" id="PTHR11088:SF60">
    <property type="entry name" value="TRNA DIMETHYLALLYLTRANSFERASE"/>
    <property type="match status" value="1"/>
</dbReference>
<dbReference type="Pfam" id="PF01715">
    <property type="entry name" value="IPPT"/>
    <property type="match status" value="1"/>
</dbReference>
<dbReference type="SUPFAM" id="SSF52540">
    <property type="entry name" value="P-loop containing nucleoside triphosphate hydrolases"/>
    <property type="match status" value="1"/>
</dbReference>
<protein>
    <recommendedName>
        <fullName evidence="1">tRNA dimethylallyltransferase</fullName>
        <ecNumber evidence="1">2.5.1.75</ecNumber>
    </recommendedName>
    <alternativeName>
        <fullName evidence="1">Dimethylallyl diphosphate:tRNA dimethylallyltransferase</fullName>
        <shortName evidence="1">DMAPP:tRNA dimethylallyltransferase</shortName>
        <shortName evidence="1">DMATase</shortName>
    </alternativeName>
    <alternativeName>
        <fullName evidence="1">Isopentenyl-diphosphate:tRNA isopentenyltransferase</fullName>
        <shortName evidence="1">IPP transferase</shortName>
        <shortName evidence="1">IPPT</shortName>
        <shortName evidence="1">IPTase</shortName>
    </alternativeName>
</protein>
<gene>
    <name evidence="1" type="primary">miaA</name>
    <name type="ordered locus">Ecaj_0457</name>
</gene>